<reference key="1">
    <citation type="journal article" date="2007" name="Nat. Biotechnol.">
        <title>Complete genome sequence of the myxobacterium Sorangium cellulosum.</title>
        <authorList>
            <person name="Schneiker S."/>
            <person name="Perlova O."/>
            <person name="Kaiser O."/>
            <person name="Gerth K."/>
            <person name="Alici A."/>
            <person name="Altmeyer M.O."/>
            <person name="Bartels D."/>
            <person name="Bekel T."/>
            <person name="Beyer S."/>
            <person name="Bode E."/>
            <person name="Bode H.B."/>
            <person name="Bolten C.J."/>
            <person name="Choudhuri J.V."/>
            <person name="Doss S."/>
            <person name="Elnakady Y.A."/>
            <person name="Frank B."/>
            <person name="Gaigalat L."/>
            <person name="Goesmann A."/>
            <person name="Groeger C."/>
            <person name="Gross F."/>
            <person name="Jelsbak L."/>
            <person name="Jelsbak L."/>
            <person name="Kalinowski J."/>
            <person name="Kegler C."/>
            <person name="Knauber T."/>
            <person name="Konietzny S."/>
            <person name="Kopp M."/>
            <person name="Krause L."/>
            <person name="Krug D."/>
            <person name="Linke B."/>
            <person name="Mahmud T."/>
            <person name="Martinez-Arias R."/>
            <person name="McHardy A.C."/>
            <person name="Merai M."/>
            <person name="Meyer F."/>
            <person name="Mormann S."/>
            <person name="Munoz-Dorado J."/>
            <person name="Perez J."/>
            <person name="Pradella S."/>
            <person name="Rachid S."/>
            <person name="Raddatz G."/>
            <person name="Rosenau F."/>
            <person name="Rueckert C."/>
            <person name="Sasse F."/>
            <person name="Scharfe M."/>
            <person name="Schuster S.C."/>
            <person name="Suen G."/>
            <person name="Treuner-Lange A."/>
            <person name="Velicer G.J."/>
            <person name="Vorholter F.-J."/>
            <person name="Weissman K.J."/>
            <person name="Welch R.D."/>
            <person name="Wenzel S.C."/>
            <person name="Whitworth D.E."/>
            <person name="Wilhelm S."/>
            <person name="Wittmann C."/>
            <person name="Bloecker H."/>
            <person name="Puehler A."/>
            <person name="Mueller R."/>
        </authorList>
    </citation>
    <scope>NUCLEOTIDE SEQUENCE [LARGE SCALE GENOMIC DNA]</scope>
    <source>
        <strain>So ce56</strain>
    </source>
</reference>
<protein>
    <recommendedName>
        <fullName evidence="1">tRNA-cytidine(32) 2-sulfurtransferase</fullName>
        <ecNumber evidence="1">2.8.1.-</ecNumber>
    </recommendedName>
    <alternativeName>
        <fullName evidence="1">Two-thiocytidine biosynthesis protein A</fullName>
    </alternativeName>
    <alternativeName>
        <fullName evidence="1">tRNA 2-thiocytidine biosynthesis protein TtcA</fullName>
    </alternativeName>
</protein>
<keyword id="KW-0004">4Fe-4S</keyword>
<keyword id="KW-0067">ATP-binding</keyword>
<keyword id="KW-0963">Cytoplasm</keyword>
<keyword id="KW-0408">Iron</keyword>
<keyword id="KW-0411">Iron-sulfur</keyword>
<keyword id="KW-0460">Magnesium</keyword>
<keyword id="KW-0479">Metal-binding</keyword>
<keyword id="KW-0547">Nucleotide-binding</keyword>
<keyword id="KW-1185">Reference proteome</keyword>
<keyword id="KW-0694">RNA-binding</keyword>
<keyword id="KW-0808">Transferase</keyword>
<keyword id="KW-0819">tRNA processing</keyword>
<keyword id="KW-0820">tRNA-binding</keyword>
<dbReference type="EC" id="2.8.1.-" evidence="1"/>
<dbReference type="EMBL" id="AM746676">
    <property type="protein sequence ID" value="CAN92740.1"/>
    <property type="molecule type" value="Genomic_DNA"/>
</dbReference>
<dbReference type="RefSeq" id="WP_012235213.1">
    <property type="nucleotide sequence ID" value="NC_010162.1"/>
</dbReference>
<dbReference type="SMR" id="A9G6U6"/>
<dbReference type="STRING" id="448385.sce2581"/>
<dbReference type="KEGG" id="scl:sce2581"/>
<dbReference type="eggNOG" id="COG0037">
    <property type="taxonomic scope" value="Bacteria"/>
</dbReference>
<dbReference type="HOGENOM" id="CLU_026481_0_0_7"/>
<dbReference type="OrthoDB" id="9801054at2"/>
<dbReference type="BioCyc" id="SCEL448385:SCE_RS13220-MONOMER"/>
<dbReference type="Proteomes" id="UP000002139">
    <property type="component" value="Chromosome"/>
</dbReference>
<dbReference type="GO" id="GO:0005737">
    <property type="term" value="C:cytoplasm"/>
    <property type="evidence" value="ECO:0007669"/>
    <property type="project" value="UniProtKB-SubCell"/>
</dbReference>
<dbReference type="GO" id="GO:0051539">
    <property type="term" value="F:4 iron, 4 sulfur cluster binding"/>
    <property type="evidence" value="ECO:0007669"/>
    <property type="project" value="UniProtKB-KW"/>
</dbReference>
<dbReference type="GO" id="GO:0005524">
    <property type="term" value="F:ATP binding"/>
    <property type="evidence" value="ECO:0007669"/>
    <property type="project" value="UniProtKB-KW"/>
</dbReference>
<dbReference type="GO" id="GO:0046872">
    <property type="term" value="F:metal ion binding"/>
    <property type="evidence" value="ECO:0007669"/>
    <property type="project" value="UniProtKB-KW"/>
</dbReference>
<dbReference type="GO" id="GO:0016740">
    <property type="term" value="F:transferase activity"/>
    <property type="evidence" value="ECO:0007669"/>
    <property type="project" value="UniProtKB-KW"/>
</dbReference>
<dbReference type="GO" id="GO:0000049">
    <property type="term" value="F:tRNA binding"/>
    <property type="evidence" value="ECO:0007669"/>
    <property type="project" value="UniProtKB-KW"/>
</dbReference>
<dbReference type="GO" id="GO:0006400">
    <property type="term" value="P:tRNA modification"/>
    <property type="evidence" value="ECO:0007669"/>
    <property type="project" value="UniProtKB-ARBA"/>
</dbReference>
<dbReference type="CDD" id="cd24138">
    <property type="entry name" value="TtcA-like"/>
    <property type="match status" value="1"/>
</dbReference>
<dbReference type="Gene3D" id="3.40.50.620">
    <property type="entry name" value="HUPs"/>
    <property type="match status" value="1"/>
</dbReference>
<dbReference type="HAMAP" id="MF_01850">
    <property type="entry name" value="TtcA"/>
    <property type="match status" value="1"/>
</dbReference>
<dbReference type="InterPro" id="IPR014729">
    <property type="entry name" value="Rossmann-like_a/b/a_fold"/>
</dbReference>
<dbReference type="InterPro" id="IPR011063">
    <property type="entry name" value="TilS/TtcA_N"/>
</dbReference>
<dbReference type="InterPro" id="IPR012089">
    <property type="entry name" value="tRNA_Cyd_32_2_STrfase"/>
</dbReference>
<dbReference type="InterPro" id="IPR035107">
    <property type="entry name" value="tRNA_thiolation_TtcA_Ctu1"/>
</dbReference>
<dbReference type="NCBIfam" id="NF007972">
    <property type="entry name" value="PRK10696.1"/>
    <property type="match status" value="1"/>
</dbReference>
<dbReference type="PANTHER" id="PTHR43686:SF1">
    <property type="entry name" value="AMINOTRAN_5 DOMAIN-CONTAINING PROTEIN"/>
    <property type="match status" value="1"/>
</dbReference>
<dbReference type="PANTHER" id="PTHR43686">
    <property type="entry name" value="SULFURTRANSFERASE-RELATED"/>
    <property type="match status" value="1"/>
</dbReference>
<dbReference type="Pfam" id="PF01171">
    <property type="entry name" value="ATP_bind_3"/>
    <property type="match status" value="1"/>
</dbReference>
<dbReference type="PIRSF" id="PIRSF004976">
    <property type="entry name" value="ATPase_YdaO"/>
    <property type="match status" value="1"/>
</dbReference>
<dbReference type="SUPFAM" id="SSF52402">
    <property type="entry name" value="Adenine nucleotide alpha hydrolases-like"/>
    <property type="match status" value="1"/>
</dbReference>
<comment type="function">
    <text evidence="1">Catalyzes the ATP-dependent 2-thiolation of cytidine in position 32 of tRNA, to form 2-thiocytidine (s(2)C32). The sulfur atoms are provided by the cysteine/cysteine desulfurase (IscS) system.</text>
</comment>
<comment type="catalytic activity">
    <reaction evidence="1">
        <text>cytidine(32) in tRNA + S-sulfanyl-L-cysteinyl-[cysteine desulfurase] + AH2 + ATP = 2-thiocytidine(32) in tRNA + L-cysteinyl-[cysteine desulfurase] + A + AMP + diphosphate + H(+)</text>
        <dbReference type="Rhea" id="RHEA:57048"/>
        <dbReference type="Rhea" id="RHEA-COMP:10288"/>
        <dbReference type="Rhea" id="RHEA-COMP:12157"/>
        <dbReference type="Rhea" id="RHEA-COMP:12158"/>
        <dbReference type="Rhea" id="RHEA-COMP:14821"/>
        <dbReference type="ChEBI" id="CHEBI:13193"/>
        <dbReference type="ChEBI" id="CHEBI:15378"/>
        <dbReference type="ChEBI" id="CHEBI:17499"/>
        <dbReference type="ChEBI" id="CHEBI:29950"/>
        <dbReference type="ChEBI" id="CHEBI:30616"/>
        <dbReference type="ChEBI" id="CHEBI:33019"/>
        <dbReference type="ChEBI" id="CHEBI:61963"/>
        <dbReference type="ChEBI" id="CHEBI:82748"/>
        <dbReference type="ChEBI" id="CHEBI:141453"/>
        <dbReference type="ChEBI" id="CHEBI:456215"/>
    </reaction>
    <physiologicalReaction direction="left-to-right" evidence="1">
        <dbReference type="Rhea" id="RHEA:57049"/>
    </physiologicalReaction>
</comment>
<comment type="cofactor">
    <cofactor evidence="1">
        <name>Mg(2+)</name>
        <dbReference type="ChEBI" id="CHEBI:18420"/>
    </cofactor>
</comment>
<comment type="cofactor">
    <cofactor evidence="1">
        <name>[4Fe-4S] cluster</name>
        <dbReference type="ChEBI" id="CHEBI:49883"/>
    </cofactor>
    <text evidence="1">Binds 1 [4Fe-4S] cluster per subunit. The cluster is chelated by three Cys residues, the fourth Fe has a free coordination site that may bind a sulfur atom transferred from the persulfide of IscS.</text>
</comment>
<comment type="pathway">
    <text evidence="1">tRNA modification.</text>
</comment>
<comment type="subunit">
    <text evidence="1">Homodimer.</text>
</comment>
<comment type="subcellular location">
    <subcellularLocation>
        <location evidence="1">Cytoplasm</location>
    </subcellularLocation>
</comment>
<comment type="miscellaneous">
    <text evidence="1">The thiolation reaction likely consists of two steps: a first activation step by ATP to form an adenylated intermediate of the target base of tRNA, and a second nucleophilic substitution step of the sulfur (S) atom supplied by the hydrosulfide attached to the Fe-S cluster.</text>
</comment>
<comment type="similarity">
    <text evidence="1">Belongs to the TtcA family.</text>
</comment>
<sequence>MQLRRKLARAMGRAITDFDMIADGDRILCAVSGGKDSYAMHALLVDLARRAPVRFSVIAVNIDQGHPGYPGHLLTDYMAAGGHEFRMISEDTYSIVTEKIPENKTYCSLCSRLRRGILYRIARELGCSKIALGHHRDDAVTTLLLNLIFAGQLKSMPPKLISDDGDNIVIRPLIYCAEAELAAFAAEERFPIIPCDLCGSQENLQRKAVSQLLADLDARHPGTRQNMLAALGNVRPSHLFDTGLWKRLGLEVAREEGSARDEAGVGAPAPDVLPVGNLLRNLA</sequence>
<name>TTCA_SORC5</name>
<proteinExistence type="inferred from homology"/>
<feature type="chain" id="PRO_0000348858" description="tRNA-cytidine(32) 2-sulfurtransferase">
    <location>
        <begin position="1"/>
        <end position="283"/>
    </location>
</feature>
<feature type="short sequence motif" description="PP-loop motif" evidence="1">
    <location>
        <begin position="32"/>
        <end position="37"/>
    </location>
</feature>
<feature type="binding site" evidence="1">
    <location>
        <position position="107"/>
    </location>
    <ligand>
        <name>[4Fe-4S] cluster</name>
        <dbReference type="ChEBI" id="CHEBI:49883"/>
    </ligand>
</feature>
<feature type="binding site" evidence="1">
    <location>
        <position position="110"/>
    </location>
    <ligand>
        <name>[4Fe-4S] cluster</name>
        <dbReference type="ChEBI" id="CHEBI:49883"/>
    </ligand>
</feature>
<feature type="binding site" evidence="1">
    <location>
        <position position="198"/>
    </location>
    <ligand>
        <name>[4Fe-4S] cluster</name>
        <dbReference type="ChEBI" id="CHEBI:49883"/>
    </ligand>
</feature>
<organism>
    <name type="scientific">Sorangium cellulosum (strain So ce56)</name>
    <name type="common">Polyangium cellulosum (strain So ce56)</name>
    <dbReference type="NCBI Taxonomy" id="448385"/>
    <lineage>
        <taxon>Bacteria</taxon>
        <taxon>Pseudomonadati</taxon>
        <taxon>Myxococcota</taxon>
        <taxon>Polyangia</taxon>
        <taxon>Polyangiales</taxon>
        <taxon>Polyangiaceae</taxon>
        <taxon>Sorangium</taxon>
    </lineage>
</organism>
<accession>A9G6U6</accession>
<gene>
    <name evidence="1" type="primary">ttcA</name>
    <name type="ordered locus">sce2581</name>
</gene>
<evidence type="ECO:0000255" key="1">
    <source>
        <dbReference type="HAMAP-Rule" id="MF_01850"/>
    </source>
</evidence>